<protein>
    <recommendedName>
        <fullName>Adapter protein MecA 1</fullName>
    </recommendedName>
</protein>
<organism>
    <name type="scientific">Halalkalibacterium halodurans (strain ATCC BAA-125 / DSM 18197 / FERM 7344 / JCM 9153 / C-125)</name>
    <name type="common">Bacillus halodurans</name>
    <dbReference type="NCBI Taxonomy" id="272558"/>
    <lineage>
        <taxon>Bacteria</taxon>
        <taxon>Bacillati</taxon>
        <taxon>Bacillota</taxon>
        <taxon>Bacilli</taxon>
        <taxon>Bacillales</taxon>
        <taxon>Bacillaceae</taxon>
        <taxon>Halalkalibacterium (ex Joshi et al. 2022)</taxon>
    </lineage>
</organism>
<feature type="chain" id="PRO_0000212264" description="Adapter protein MecA 1">
    <location>
        <begin position="1"/>
        <end position="201"/>
    </location>
</feature>
<gene>
    <name type="primary">mecA1</name>
    <name type="ordered locus">BH1620</name>
</gene>
<sequence>MRLERLAVNKIKVFLTFDDLKERGITKDELWQDIPKVHDLFRDMMLEADDELGFKADGPIAVEVFALPAQGMVIIVTKGHQESDFDEDGLEDGYIEMQVTLDESDEVFYEFADIEDVISLVPRLVTLGMTGGTLYSYQGRYYISFTDLDLDGIDEESLIALLAEYGYPSTISTYRVAEYGSLIIANDACIKLYQSFFKART</sequence>
<reference key="1">
    <citation type="journal article" date="2000" name="Nucleic Acids Res.">
        <title>Complete genome sequence of the alkaliphilic bacterium Bacillus halodurans and genomic sequence comparison with Bacillus subtilis.</title>
        <authorList>
            <person name="Takami H."/>
            <person name="Nakasone K."/>
            <person name="Takaki Y."/>
            <person name="Maeno G."/>
            <person name="Sasaki R."/>
            <person name="Masui N."/>
            <person name="Fuji F."/>
            <person name="Hirama C."/>
            <person name="Nakamura Y."/>
            <person name="Ogasawara N."/>
            <person name="Kuhara S."/>
            <person name="Horikoshi K."/>
        </authorList>
    </citation>
    <scope>NUCLEOTIDE SEQUENCE [LARGE SCALE GENOMIC DNA]</scope>
    <source>
        <strain>ATCC BAA-125 / DSM 18197 / FERM 7344 / JCM 9153 / C-125</strain>
    </source>
</reference>
<accession>Q9KCF1</accession>
<proteinExistence type="inferred from homology"/>
<keyword id="KW-0178">Competence</keyword>
<keyword id="KW-1185">Reference proteome</keyword>
<keyword id="KW-0749">Sporulation</keyword>
<name>MECA1_HALH5</name>
<dbReference type="EMBL" id="BA000004">
    <property type="protein sequence ID" value="BAB05339.1"/>
    <property type="molecule type" value="Genomic_DNA"/>
</dbReference>
<dbReference type="PIR" id="D83852">
    <property type="entry name" value="D83852"/>
</dbReference>
<dbReference type="RefSeq" id="WP_010897783.1">
    <property type="nucleotide sequence ID" value="NC_002570.2"/>
</dbReference>
<dbReference type="SMR" id="Q9KCF1"/>
<dbReference type="STRING" id="272558.gene:10727518"/>
<dbReference type="GeneID" id="87597240"/>
<dbReference type="KEGG" id="bha:BH1620"/>
<dbReference type="eggNOG" id="COG4862">
    <property type="taxonomic scope" value="Bacteria"/>
</dbReference>
<dbReference type="HOGENOM" id="CLU_071496_3_0_9"/>
<dbReference type="OrthoDB" id="2085234at2"/>
<dbReference type="Proteomes" id="UP000001258">
    <property type="component" value="Chromosome"/>
</dbReference>
<dbReference type="GO" id="GO:0030674">
    <property type="term" value="F:protein-macromolecule adaptor activity"/>
    <property type="evidence" value="ECO:0007669"/>
    <property type="project" value="UniProtKB-UniRule"/>
</dbReference>
<dbReference type="GO" id="GO:0030420">
    <property type="term" value="P:establishment of competence for transformation"/>
    <property type="evidence" value="ECO:0007669"/>
    <property type="project" value="UniProtKB-KW"/>
</dbReference>
<dbReference type="GO" id="GO:0045808">
    <property type="term" value="P:negative regulation of establishment of competence for transformation"/>
    <property type="evidence" value="ECO:0007669"/>
    <property type="project" value="UniProtKB-UniRule"/>
</dbReference>
<dbReference type="GO" id="GO:0042174">
    <property type="term" value="P:negative regulation of sporulation resulting in formation of a cellular spore"/>
    <property type="evidence" value="ECO:0007669"/>
    <property type="project" value="UniProtKB-UniRule"/>
</dbReference>
<dbReference type="GO" id="GO:0030435">
    <property type="term" value="P:sporulation resulting in formation of a cellular spore"/>
    <property type="evidence" value="ECO:0007669"/>
    <property type="project" value="UniProtKB-KW"/>
</dbReference>
<dbReference type="Gene3D" id="3.30.70.1950">
    <property type="match status" value="1"/>
</dbReference>
<dbReference type="HAMAP" id="MF_01124">
    <property type="entry name" value="MecA"/>
    <property type="match status" value="1"/>
</dbReference>
<dbReference type="InterPro" id="IPR038471">
    <property type="entry name" value="MecA_C_sf"/>
</dbReference>
<dbReference type="InterPro" id="IPR008681">
    <property type="entry name" value="Neg-reg_MecA"/>
</dbReference>
<dbReference type="NCBIfam" id="NF002781">
    <property type="entry name" value="PRK02899.1"/>
    <property type="match status" value="1"/>
</dbReference>
<dbReference type="PANTHER" id="PTHR39161">
    <property type="entry name" value="ADAPTER PROTEIN MECA"/>
    <property type="match status" value="1"/>
</dbReference>
<dbReference type="PANTHER" id="PTHR39161:SF2">
    <property type="entry name" value="ADAPTER PROTEIN MECA 2"/>
    <property type="match status" value="1"/>
</dbReference>
<dbReference type="Pfam" id="PF05389">
    <property type="entry name" value="MecA"/>
    <property type="match status" value="1"/>
</dbReference>
<dbReference type="PIRSF" id="PIRSF029008">
    <property type="entry name" value="MecA"/>
    <property type="match status" value="1"/>
</dbReference>
<evidence type="ECO:0000250" key="1"/>
<evidence type="ECO:0000305" key="2"/>
<comment type="function">
    <text evidence="1">Enables the recognition and targeting of unfolded and aggregated proteins to the ClpC protease or to other proteins involved in proteolysis. Acts negatively in the development of competence by binding ComK and recruiting it to the ClpCP protease. When overexpressed, inhibits sporulation. Also involved in Spx degradation by ClpC (By similarity).</text>
</comment>
<comment type="subunit">
    <text evidence="1">Homodimer.</text>
</comment>
<comment type="domain">
    <text>The N-terminal domain has binding sites for ComK and probably for unfolded/aggregated proteins; the C-terminal domain interacts with ClpC.</text>
</comment>
<comment type="similarity">
    <text evidence="2">Belongs to the MecA family.</text>
</comment>